<proteinExistence type="evidence at protein level"/>
<sequence length="251" mass="27559">MEGGAAAATPTALPYYVAFSQLLGLTLVAMTGAWLGLYRGGIAWESDLQFNAHPLCMVIGLIFLQGNALLVYRVFRNEAKRTTKVLHGLLHIFALVIALVGLVAVFDYHRKKGYADLYSLHSWCGILVFVLYFVQWLVGFSFFLFPGASFSLRSRYRPQHIFFGATIFLLSVGTALLGLKEALLFNLGGKYSAFEPEGVLANVLGLLLACFGGAVLYILTRADWKRPSQAEEQALSMDFKTLTEGDSPGSQ</sequence>
<organism>
    <name type="scientific">Homo sapiens</name>
    <name type="common">Human</name>
    <dbReference type="NCBI Taxonomy" id="9606"/>
    <lineage>
        <taxon>Eukaryota</taxon>
        <taxon>Metazoa</taxon>
        <taxon>Chordata</taxon>
        <taxon>Craniata</taxon>
        <taxon>Vertebrata</taxon>
        <taxon>Euteleostomi</taxon>
        <taxon>Mammalia</taxon>
        <taxon>Eutheria</taxon>
        <taxon>Euarchontoglires</taxon>
        <taxon>Primates</taxon>
        <taxon>Haplorrhini</taxon>
        <taxon>Catarrhini</taxon>
        <taxon>Hominidae</taxon>
        <taxon>Homo</taxon>
    </lineage>
</organism>
<name>CY561_HUMAN</name>
<dbReference type="EC" id="7.2.1.-" evidence="1"/>
<dbReference type="EMBL" id="U29462">
    <property type="protein sequence ID" value="AAC50212.1"/>
    <property type="molecule type" value="Genomic_DNA"/>
</dbReference>
<dbReference type="EMBL" id="U29460">
    <property type="protein sequence ID" value="AAC50212.1"/>
    <property type="status" value="JOINED"/>
    <property type="molecule type" value="Genomic_DNA"/>
</dbReference>
<dbReference type="EMBL" id="U29461">
    <property type="protein sequence ID" value="AAC50212.1"/>
    <property type="status" value="JOINED"/>
    <property type="molecule type" value="Genomic_DNA"/>
</dbReference>
<dbReference type="EMBL" id="U29464">
    <property type="protein sequence ID" value="AAC50212.1"/>
    <property type="status" value="JOINED"/>
    <property type="molecule type" value="Genomic_DNA"/>
</dbReference>
<dbReference type="EMBL" id="U29469">
    <property type="protein sequence ID" value="AAC50212.1"/>
    <property type="status" value="JOINED"/>
    <property type="molecule type" value="Genomic_DNA"/>
</dbReference>
<dbReference type="EMBL" id="BT007096">
    <property type="protein sequence ID" value="AAP35760.1"/>
    <property type="molecule type" value="mRNA"/>
</dbReference>
<dbReference type="EMBL" id="AK301541">
    <property type="protein sequence ID" value="BAH13511.1"/>
    <property type="molecule type" value="mRNA"/>
</dbReference>
<dbReference type="EMBL" id="AK316606">
    <property type="protein sequence ID" value="BAG38193.1"/>
    <property type="molecule type" value="mRNA"/>
</dbReference>
<dbReference type="EMBL" id="AC005828">
    <property type="status" value="NOT_ANNOTATED_CDS"/>
    <property type="molecule type" value="Genomic_DNA"/>
</dbReference>
<dbReference type="EMBL" id="CH471109">
    <property type="protein sequence ID" value="EAW94322.1"/>
    <property type="molecule type" value="Genomic_DNA"/>
</dbReference>
<dbReference type="EMBL" id="CH471109">
    <property type="protein sequence ID" value="EAW94323.1"/>
    <property type="molecule type" value="Genomic_DNA"/>
</dbReference>
<dbReference type="EMBL" id="CH471109">
    <property type="protein sequence ID" value="EAW94326.1"/>
    <property type="molecule type" value="Genomic_DNA"/>
</dbReference>
<dbReference type="EMBL" id="BC000021">
    <property type="protein sequence ID" value="AAH00021.1"/>
    <property type="molecule type" value="mRNA"/>
</dbReference>
<dbReference type="EMBL" id="BC002976">
    <property type="protein sequence ID" value="AAH02976.1"/>
    <property type="molecule type" value="mRNA"/>
</dbReference>
<dbReference type="EMBL" id="BC091485">
    <property type="protein sequence ID" value="AAH91485.1"/>
    <property type="molecule type" value="mRNA"/>
</dbReference>
<dbReference type="EMBL" id="U06715">
    <property type="protein sequence ID" value="AAA50952.1"/>
    <property type="molecule type" value="mRNA"/>
</dbReference>
<dbReference type="CCDS" id="CCDS11636.1">
    <molecule id="P49447-1"/>
</dbReference>
<dbReference type="PIR" id="S53321">
    <property type="entry name" value="S53321"/>
</dbReference>
<dbReference type="RefSeq" id="NP_001017916.1">
    <molecule id="P49447-1"/>
    <property type="nucleotide sequence ID" value="NM_001017916.2"/>
</dbReference>
<dbReference type="RefSeq" id="NP_001017917.1">
    <molecule id="P49447-1"/>
    <property type="nucleotide sequence ID" value="NM_001017917.2"/>
</dbReference>
<dbReference type="RefSeq" id="NP_001317350.1">
    <property type="nucleotide sequence ID" value="NM_001330421.1"/>
</dbReference>
<dbReference type="RefSeq" id="NP_001906.3">
    <molecule id="P49447-1"/>
    <property type="nucleotide sequence ID" value="NM_001915.3"/>
</dbReference>
<dbReference type="RefSeq" id="XP_005257148.1">
    <property type="nucleotide sequence ID" value="XM_005257091.1"/>
</dbReference>
<dbReference type="SMR" id="P49447"/>
<dbReference type="BioGRID" id="107914">
    <property type="interactions" value="64"/>
</dbReference>
<dbReference type="FunCoup" id="P49447">
    <property type="interactions" value="516"/>
</dbReference>
<dbReference type="IntAct" id="P49447">
    <property type="interactions" value="60"/>
</dbReference>
<dbReference type="MINT" id="P49447"/>
<dbReference type="STRING" id="9606.ENSP00000464215"/>
<dbReference type="TCDB" id="5.B.2.1.4">
    <property type="family name" value="the eukaryotic cytochrome b561 (cytb561) family"/>
</dbReference>
<dbReference type="iPTMnet" id="P49447"/>
<dbReference type="PhosphoSitePlus" id="P49447"/>
<dbReference type="SwissPalm" id="P49447"/>
<dbReference type="BioMuta" id="CYB561"/>
<dbReference type="DMDM" id="25453426"/>
<dbReference type="jPOST" id="P49447"/>
<dbReference type="MassIVE" id="P49447"/>
<dbReference type="PaxDb" id="9606-ENSP00000376702"/>
<dbReference type="PeptideAtlas" id="P49447"/>
<dbReference type="ProteomicsDB" id="56011">
    <molecule id="P49447-1"/>
</dbReference>
<dbReference type="Pumba" id="P49447"/>
<dbReference type="Antibodypedia" id="18653">
    <property type="antibodies" value="85 antibodies from 16 providers"/>
</dbReference>
<dbReference type="DNASU" id="1534"/>
<dbReference type="Ensembl" id="ENST00000360793.8">
    <molecule id="P49447-1"/>
    <property type="protein sequence ID" value="ENSP00000354028.3"/>
    <property type="gene ID" value="ENSG00000008283.16"/>
</dbReference>
<dbReference type="Ensembl" id="ENST00000392975.6">
    <molecule id="P49447-1"/>
    <property type="protein sequence ID" value="ENSP00000376701.2"/>
    <property type="gene ID" value="ENSG00000008283.16"/>
</dbReference>
<dbReference type="Ensembl" id="ENST00000392976.5">
    <molecule id="P49447-1"/>
    <property type="protein sequence ID" value="ENSP00000376702.1"/>
    <property type="gene ID" value="ENSG00000008283.16"/>
</dbReference>
<dbReference type="Ensembl" id="ENST00000448884.6">
    <molecule id="P49447-2"/>
    <property type="protein sequence ID" value="ENSP00000400350.2"/>
    <property type="gene ID" value="ENSG00000008283.16"/>
</dbReference>
<dbReference type="Ensembl" id="ENST00000581573.5">
    <molecule id="P49447-1"/>
    <property type="protein sequence ID" value="ENSP00000462325.1"/>
    <property type="gene ID" value="ENSG00000008283.16"/>
</dbReference>
<dbReference type="Ensembl" id="ENST00000584291.5">
    <molecule id="P49447-1"/>
    <property type="protein sequence ID" value="ENSP00000462543.1"/>
    <property type="gene ID" value="ENSG00000008283.16"/>
</dbReference>
<dbReference type="GeneID" id="1534"/>
<dbReference type="KEGG" id="hsa:1534"/>
<dbReference type="MANE-Select" id="ENST00000360793.8">
    <property type="protein sequence ID" value="ENSP00000354028.3"/>
    <property type="RefSeq nucleotide sequence ID" value="NM_001915.4"/>
    <property type="RefSeq protein sequence ID" value="NP_001906.3"/>
</dbReference>
<dbReference type="UCSC" id="uc002jap.4">
    <molecule id="P49447-1"/>
    <property type="organism name" value="human"/>
</dbReference>
<dbReference type="AGR" id="HGNC:2571"/>
<dbReference type="CTD" id="1534"/>
<dbReference type="DisGeNET" id="1534"/>
<dbReference type="GeneCards" id="CYB561"/>
<dbReference type="HGNC" id="HGNC:2571">
    <property type="gene designation" value="CYB561"/>
</dbReference>
<dbReference type="HPA" id="ENSG00000008283">
    <property type="expression patterns" value="Low tissue specificity"/>
</dbReference>
<dbReference type="MalaCards" id="CYB561"/>
<dbReference type="MIM" id="600019">
    <property type="type" value="gene"/>
</dbReference>
<dbReference type="MIM" id="618182">
    <property type="type" value="phenotype"/>
</dbReference>
<dbReference type="neXtProt" id="NX_P49447"/>
<dbReference type="OpenTargets" id="ENSG00000008283"/>
<dbReference type="PharmGKB" id="PA27069"/>
<dbReference type="VEuPathDB" id="HostDB:ENSG00000008283"/>
<dbReference type="eggNOG" id="KOG1619">
    <property type="taxonomic scope" value="Eukaryota"/>
</dbReference>
<dbReference type="GeneTree" id="ENSGT00950000183197"/>
<dbReference type="HOGENOM" id="CLU_069712_3_2_1"/>
<dbReference type="InParanoid" id="P49447"/>
<dbReference type="OMA" id="LHFRGGM"/>
<dbReference type="OrthoDB" id="907479at2759"/>
<dbReference type="PAN-GO" id="P49447">
    <property type="GO annotations" value="2 GO annotations based on evolutionary models"/>
</dbReference>
<dbReference type="PhylomeDB" id="P49447"/>
<dbReference type="TreeFam" id="TF314222"/>
<dbReference type="BRENDA" id="7.2.1.3">
    <property type="organism ID" value="2681"/>
</dbReference>
<dbReference type="PathwayCommons" id="P49447"/>
<dbReference type="SignaLink" id="P49447"/>
<dbReference type="BioGRID-ORCS" id="1534">
    <property type="hits" value="21 hits in 1153 CRISPR screens"/>
</dbReference>
<dbReference type="ChiTaRS" id="CYB561">
    <property type="organism name" value="human"/>
</dbReference>
<dbReference type="GeneWiki" id="CYB561"/>
<dbReference type="GenomeRNAi" id="1534"/>
<dbReference type="Pharos" id="P49447">
    <property type="development level" value="Tbio"/>
</dbReference>
<dbReference type="PRO" id="PR:P49447"/>
<dbReference type="Proteomes" id="UP000005640">
    <property type="component" value="Chromosome 17"/>
</dbReference>
<dbReference type="RNAct" id="P49447">
    <property type="molecule type" value="protein"/>
</dbReference>
<dbReference type="Bgee" id="ENSG00000008283">
    <property type="expression patterns" value="Expressed in right uterine tube and 186 other cell types or tissues"/>
</dbReference>
<dbReference type="ExpressionAtlas" id="P49447">
    <property type="expression patterns" value="baseline and differential"/>
</dbReference>
<dbReference type="GO" id="GO:0042584">
    <property type="term" value="C:chromaffin granule membrane"/>
    <property type="evidence" value="ECO:0000250"/>
    <property type="project" value="UniProtKB"/>
</dbReference>
<dbReference type="GO" id="GO:0005765">
    <property type="term" value="C:lysosomal membrane"/>
    <property type="evidence" value="ECO:0000318"/>
    <property type="project" value="GO_Central"/>
</dbReference>
<dbReference type="GO" id="GO:0016020">
    <property type="term" value="C:membrane"/>
    <property type="evidence" value="ECO:0000303"/>
    <property type="project" value="UniProtKB"/>
</dbReference>
<dbReference type="GO" id="GO:0046872">
    <property type="term" value="F:metal ion binding"/>
    <property type="evidence" value="ECO:0007669"/>
    <property type="project" value="UniProtKB-KW"/>
</dbReference>
<dbReference type="GO" id="GO:0016491">
    <property type="term" value="F:oxidoreductase activity"/>
    <property type="evidence" value="ECO:0000318"/>
    <property type="project" value="GO_Central"/>
</dbReference>
<dbReference type="GO" id="GO:0140575">
    <property type="term" value="F:transmembrane monodehydroascorbate reductase activity"/>
    <property type="evidence" value="ECO:0000250"/>
    <property type="project" value="UniProtKB"/>
</dbReference>
<dbReference type="GO" id="GO:0140576">
    <property type="term" value="P:ascorbate homeostasis"/>
    <property type="evidence" value="ECO:0000250"/>
    <property type="project" value="UniProtKB"/>
</dbReference>
<dbReference type="GO" id="GO:0022900">
    <property type="term" value="P:electron transport chain"/>
    <property type="evidence" value="ECO:0000303"/>
    <property type="project" value="UniProtKB"/>
</dbReference>
<dbReference type="GO" id="GO:0006879">
    <property type="term" value="P:intracellular iron ion homeostasis"/>
    <property type="evidence" value="ECO:0007669"/>
    <property type="project" value="Ensembl"/>
</dbReference>
<dbReference type="CDD" id="cd08763">
    <property type="entry name" value="Cyt_b561_CYB561"/>
    <property type="match status" value="1"/>
</dbReference>
<dbReference type="FunFam" id="1.20.120.1770:FF:000001">
    <property type="entry name" value="Cytochrome b reductase 1"/>
    <property type="match status" value="1"/>
</dbReference>
<dbReference type="Gene3D" id="1.20.120.1770">
    <property type="match status" value="1"/>
</dbReference>
<dbReference type="InterPro" id="IPR043205">
    <property type="entry name" value="CYB561/CYBRD1-like"/>
</dbReference>
<dbReference type="InterPro" id="IPR006593">
    <property type="entry name" value="Cyt_b561/ferric_Rdtase_TM"/>
</dbReference>
<dbReference type="PANTHER" id="PTHR10106">
    <property type="entry name" value="CYTOCHROME B561-RELATED"/>
    <property type="match status" value="1"/>
</dbReference>
<dbReference type="PANTHER" id="PTHR10106:SF14">
    <property type="entry name" value="TRANSMEMBRANE ASCORBATE-DEPENDENT REDUCTASE CYB561"/>
    <property type="match status" value="1"/>
</dbReference>
<dbReference type="Pfam" id="PF03188">
    <property type="entry name" value="Cytochrom_B561"/>
    <property type="match status" value="1"/>
</dbReference>
<dbReference type="SMART" id="SM00665">
    <property type="entry name" value="B561"/>
    <property type="match status" value="1"/>
</dbReference>
<dbReference type="PROSITE" id="PS50939">
    <property type="entry name" value="CYTOCHROME_B561"/>
    <property type="match status" value="1"/>
</dbReference>
<evidence type="ECO:0000250" key="1">
    <source>
        <dbReference type="UniProtKB" id="P10897"/>
    </source>
</evidence>
<evidence type="ECO:0000250" key="2">
    <source>
        <dbReference type="UniProtKB" id="Q53TN4"/>
    </source>
</evidence>
<evidence type="ECO:0000250" key="3">
    <source>
        <dbReference type="UniProtKB" id="Q60720"/>
    </source>
</evidence>
<evidence type="ECO:0000255" key="4"/>
<evidence type="ECO:0000255" key="5">
    <source>
        <dbReference type="PROSITE-ProRule" id="PRU00242"/>
    </source>
</evidence>
<evidence type="ECO:0000269" key="6">
    <source>
    </source>
</evidence>
<evidence type="ECO:0000303" key="7">
    <source>
    </source>
</evidence>
<evidence type="ECO:0000305" key="8"/>
<evidence type="ECO:0000312" key="9">
    <source>
        <dbReference type="HGNC" id="HGNC:2571"/>
    </source>
</evidence>
<comment type="function">
    <text evidence="1">Transmembrane reductase that uses ascorbate as an electron donor in the cytoplasm and transfers electrons across membranes to reduce monodehydro-L-ascorbate radical in the lumen of secretory vesicles. It is therefore involved the regeneration and homeostasis within secretory vesicles of ascorbate which in turn provides reducing equivalents needed to support the activity of intravesicular enzymes.</text>
</comment>
<comment type="catalytic activity">
    <reaction evidence="1">
        <text>monodehydro-L-ascorbate radical(out) + L-ascorbate(in) = monodehydro-L-ascorbate radical(in) + L-ascorbate(out)</text>
        <dbReference type="Rhea" id="RHEA:66524"/>
        <dbReference type="ChEBI" id="CHEBI:38290"/>
        <dbReference type="ChEBI" id="CHEBI:59513"/>
    </reaction>
    <physiologicalReaction direction="left-to-right" evidence="1">
        <dbReference type="Rhea" id="RHEA:66525"/>
    </physiologicalReaction>
</comment>
<comment type="cofactor">
    <cofactor evidence="1">
        <name>heme b</name>
        <dbReference type="ChEBI" id="CHEBI:60344"/>
    </cofactor>
    <text evidence="1">Binds 2 heme b groups non-covalently.</text>
</comment>
<comment type="interaction">
    <interactant intactId="EBI-8646596">
        <id>P49447</id>
    </interactant>
    <interactant intactId="EBI-12109402">
        <id>Q86W74-2</id>
        <label>ANKRD46</label>
    </interactant>
    <organismsDiffer>false</organismsDiffer>
    <experiments>3</experiments>
</comment>
<comment type="interaction">
    <interactant intactId="EBI-8646596">
        <id>P49447</id>
    </interactant>
    <interactant intactId="EBI-13059134">
        <id>Q13520</id>
        <label>AQP6</label>
    </interactant>
    <organismsDiffer>false</organismsDiffer>
    <experiments>3</experiments>
</comment>
<comment type="interaction">
    <interactant intactId="EBI-8646596">
        <id>P49447</id>
    </interactant>
    <interactant intactId="EBI-19947314">
        <id>Q8NFU1</id>
        <label>BEST2</label>
    </interactant>
    <organismsDiffer>false</organismsDiffer>
    <experiments>3</experiments>
</comment>
<comment type="interaction">
    <interactant intactId="EBI-8646596">
        <id>P49447</id>
    </interactant>
    <interactant intactId="EBI-749204">
        <id>O15155</id>
        <label>BET1</label>
    </interactant>
    <organismsDiffer>false</organismsDiffer>
    <experiments>3</experiments>
</comment>
<comment type="interaction">
    <interactant intactId="EBI-8646596">
        <id>P49447</id>
    </interactant>
    <interactant intactId="EBI-700794">
        <id>Q13323</id>
        <label>BIK</label>
    </interactant>
    <organismsDiffer>false</organismsDiffer>
    <experiments>3</experiments>
</comment>
<comment type="interaction">
    <interactant intactId="EBI-8646596">
        <id>P49447</id>
    </interactant>
    <interactant intactId="EBI-4402847">
        <id>Q12981</id>
        <label>BNIP1</label>
    </interactant>
    <organismsDiffer>false</organismsDiffer>
    <experiments>3</experiments>
</comment>
<comment type="interaction">
    <interactant intactId="EBI-8646596">
        <id>P49447</id>
    </interactant>
    <interactant intactId="EBI-7797864">
        <id>P11912</id>
        <label>CD79A</label>
    </interactant>
    <organismsDiffer>false</organismsDiffer>
    <experiments>3</experiments>
</comment>
<comment type="interaction">
    <interactant intactId="EBI-8646596">
        <id>P49447</id>
    </interactant>
    <interactant intactId="EBI-358858">
        <id>O14735</id>
        <label>CDIPT</label>
    </interactant>
    <organismsDiffer>false</organismsDiffer>
    <experiments>3</experiments>
</comment>
<comment type="interaction">
    <interactant intactId="EBI-8646596">
        <id>P49447</id>
    </interactant>
    <interactant intactId="EBI-18341636">
        <id>O95484</id>
        <label>CLDN9</label>
    </interactant>
    <organismsDiffer>false</organismsDiffer>
    <experiments>3</experiments>
</comment>
<comment type="interaction">
    <interactant intactId="EBI-8646596">
        <id>P49447</id>
    </interactant>
    <interactant intactId="EBI-2339374">
        <id>Q8TAZ6</id>
        <label>CMTM2</label>
    </interactant>
    <organismsDiffer>false</organismsDiffer>
    <experiments>3</experiments>
</comment>
<comment type="interaction">
    <interactant intactId="EBI-8646596">
        <id>P49447</id>
    </interactant>
    <interactant intactId="EBI-3917045">
        <id>Q6PI48</id>
        <label>DARS2</label>
    </interactant>
    <organismsDiffer>false</organismsDiffer>
    <experiments>3</experiments>
</comment>
<comment type="interaction">
    <interactant intactId="EBI-8646596">
        <id>P49447</id>
    </interactant>
    <interactant intactId="EBI-3915253">
        <id>Q15125</id>
        <label>EBP</label>
    </interactant>
    <organismsDiffer>false</organismsDiffer>
    <experiments>3</experiments>
</comment>
<comment type="interaction">
    <interactant intactId="EBI-8646596">
        <id>P49447</id>
    </interactant>
    <interactant intactId="EBI-529425">
        <id>Q92838</id>
        <label>EDA</label>
    </interactant>
    <organismsDiffer>false</organismsDiffer>
    <experiments>6</experiments>
</comment>
<comment type="interaction">
    <interactant intactId="EBI-8646596">
        <id>P49447</id>
    </interactant>
    <interactant intactId="EBI-1753674">
        <id>P52803</id>
        <label>EFNA5</label>
    </interactant>
    <organismsDiffer>false</organismsDiffer>
    <experiments>3</experiments>
</comment>
<comment type="interaction">
    <interactant intactId="EBI-8646596">
        <id>P49447</id>
    </interactant>
    <interactant intactId="EBI-2339219">
        <id>Q08426</id>
        <label>EHHADH</label>
    </interactant>
    <organismsDiffer>false</organismsDiffer>
    <experiments>3</experiments>
</comment>
<comment type="interaction">
    <interactant intactId="EBI-8646596">
        <id>P49447</id>
    </interactant>
    <interactant intactId="EBI-711490">
        <id>Q9UKR5</id>
        <label>ERG28</label>
    </interactant>
    <organismsDiffer>false</organismsDiffer>
    <experiments>3</experiments>
</comment>
<comment type="interaction">
    <interactant intactId="EBI-8646596">
        <id>P49447</id>
    </interactant>
    <interactant intactId="EBI-781551">
        <id>Q9Y282</id>
        <label>ERGIC3</label>
    </interactant>
    <organismsDiffer>false</organismsDiffer>
    <experiments>3</experiments>
</comment>
<comment type="interaction">
    <interactant intactId="EBI-8646596">
        <id>P49447</id>
    </interactant>
    <interactant intactId="EBI-724839">
        <id>Q14318</id>
        <label>FKBP8</label>
    </interactant>
    <organismsDiffer>false</organismsDiffer>
    <experiments>3</experiments>
</comment>
<comment type="interaction">
    <interactant intactId="EBI-8646596">
        <id>P49447</id>
    </interactant>
    <interactant intactId="EBI-1058791">
        <id>Q9UJ14</id>
        <label>GGT7</label>
    </interactant>
    <organismsDiffer>false</organismsDiffer>
    <experiments>3</experiments>
</comment>
<comment type="interaction">
    <interactant intactId="EBI-8646596">
        <id>P49447</id>
    </interactant>
    <interactant intactId="EBI-6166686">
        <id>Q96F15</id>
        <label>GIMAP5</label>
    </interactant>
    <organismsDiffer>false</organismsDiffer>
    <experiments>3</experiments>
</comment>
<comment type="interaction">
    <interactant intactId="EBI-8646596">
        <id>P49447</id>
    </interactant>
    <interactant intactId="EBI-4401517">
        <id>O14653</id>
        <label>GOSR2</label>
    </interactant>
    <organismsDiffer>false</organismsDiffer>
    <experiments>3</experiments>
</comment>
<comment type="interaction">
    <interactant intactId="EBI-8646596">
        <id>P49447</id>
    </interactant>
    <interactant intactId="EBI-13345167">
        <id>Q8TDT2</id>
        <label>GPR152</label>
    </interactant>
    <organismsDiffer>false</organismsDiffer>
    <experiments>3</experiments>
</comment>
<comment type="interaction">
    <interactant intactId="EBI-8646596">
        <id>P49447</id>
    </interactant>
    <interactant intactId="EBI-11721746">
        <id>Q8TED1</id>
        <label>GPX8</label>
    </interactant>
    <organismsDiffer>false</organismsDiffer>
    <experiments>3</experiments>
</comment>
<comment type="interaction">
    <interactant intactId="EBI-8646596">
        <id>P49447</id>
    </interactant>
    <interactant intactId="EBI-2806151">
        <id>P09601</id>
        <label>HMOX1</label>
    </interactant>
    <organismsDiffer>false</organismsDiffer>
    <experiments>3</experiments>
</comment>
<comment type="interaction">
    <interactant intactId="EBI-8646596">
        <id>P49447</id>
    </interactant>
    <interactant intactId="EBI-2820517">
        <id>Q8TAF8</id>
        <label>LHFPL5</label>
    </interactant>
    <organismsDiffer>false</organismsDiffer>
    <experiments>3</experiments>
</comment>
<comment type="interaction">
    <interactant intactId="EBI-8646596">
        <id>P49447</id>
    </interactant>
    <interactant intactId="EBI-12033434">
        <id>Q9UBY5</id>
        <label>LPAR3</label>
    </interactant>
    <organismsDiffer>false</organismsDiffer>
    <experiments>3</experiments>
</comment>
<comment type="interaction">
    <interactant intactId="EBI-8646596">
        <id>P49447</id>
    </interactant>
    <interactant intactId="EBI-12807478">
        <id>P35372-10</id>
        <label>OPRM1</label>
    </interactant>
    <organismsDiffer>false</organismsDiffer>
    <experiments>3</experiments>
</comment>
<comment type="interaction">
    <interactant intactId="EBI-8646596">
        <id>P49447</id>
    </interactant>
    <interactant intactId="EBI-11075081">
        <id>Q53FV1</id>
        <label>ORMDL2</label>
    </interactant>
    <organismsDiffer>false</organismsDiffer>
    <experiments>3</experiments>
</comment>
<comment type="interaction">
    <interactant intactId="EBI-8646596">
        <id>P49447</id>
    </interactant>
    <interactant intactId="EBI-608347">
        <id>Q04941</id>
        <label>PLP2</label>
    </interactant>
    <organismsDiffer>false</organismsDiffer>
    <experiments>3</experiments>
</comment>
<comment type="interaction">
    <interactant intactId="EBI-8646596">
        <id>P49447</id>
    </interactant>
    <interactant intactId="EBI-14065960">
        <id>Q96HR9-2</id>
        <label>REEP6</label>
    </interactant>
    <organismsDiffer>false</organismsDiffer>
    <experiments>3</experiments>
</comment>
<comment type="interaction">
    <interactant intactId="EBI-8646596">
        <id>P49447</id>
    </interactant>
    <interactant intactId="EBI-348482">
        <id>Q99942</id>
        <label>RNF5</label>
    </interactant>
    <organismsDiffer>false</organismsDiffer>
    <experiments>3</experiments>
</comment>
<comment type="interaction">
    <interactant intactId="EBI-8646596">
        <id>P49447</id>
    </interactant>
    <interactant intactId="EBI-2684237">
        <id>O00767</id>
        <label>SCD</label>
    </interactant>
    <organismsDiffer>false</organismsDiffer>
    <experiments>3</experiments>
</comment>
<comment type="interaction">
    <interactant intactId="EBI-8646596">
        <id>P49447</id>
    </interactant>
    <interactant intactId="EBI-8652744">
        <id>Q96IW7</id>
        <label>SEC22A</label>
    </interactant>
    <organismsDiffer>false</organismsDiffer>
    <experiments>3</experiments>
</comment>
<comment type="interaction">
    <interactant intactId="EBI-8646596">
        <id>P49447</id>
    </interactant>
    <interactant intactId="EBI-749270">
        <id>Q8N6R1</id>
        <label>SERP2</label>
    </interactant>
    <organismsDiffer>false</organismsDiffer>
    <experiments>3</experiments>
</comment>
<comment type="interaction">
    <interactant intactId="EBI-8646596">
        <id>P49447</id>
    </interactant>
    <interactant intactId="EBI-3923779">
        <id>Q9BZV2</id>
        <label>SLC19A3</label>
    </interactant>
    <organismsDiffer>false</organismsDiffer>
    <experiments>3</experiments>
</comment>
<comment type="interaction">
    <interactant intactId="EBI-8646596">
        <id>P49447</id>
    </interactant>
    <interactant intactId="EBI-17295964">
        <id>Q9NQQ7-3</id>
        <label>SLC35C2</label>
    </interactant>
    <organismsDiffer>false</organismsDiffer>
    <experiments>3</experiments>
</comment>
<comment type="interaction">
    <interactant intactId="EBI-8646596">
        <id>P49447</id>
    </interactant>
    <interactant intactId="EBI-10314552">
        <id>Q9NVC3</id>
        <label>SLC38A7</label>
    </interactant>
    <organismsDiffer>false</organismsDiffer>
    <experiments>3</experiments>
</comment>
<comment type="interaction">
    <interactant intactId="EBI-8646596">
        <id>P49447</id>
    </interactant>
    <interactant intactId="EBI-726491">
        <id>Q9NY26</id>
        <label>SLC39A1</label>
    </interactant>
    <organismsDiffer>false</organismsDiffer>
    <experiments>3</experiments>
</comment>
<comment type="interaction">
    <interactant intactId="EBI-8646596">
        <id>P49447</id>
    </interactant>
    <interactant intactId="EBI-12898013">
        <id>Q9NP94</id>
        <label>SLC39A2</label>
    </interactant>
    <organismsDiffer>false</organismsDiffer>
    <experiments>3</experiments>
</comment>
<comment type="interaction">
    <interactant intactId="EBI-8646596">
        <id>P49447</id>
    </interactant>
    <interactant intactId="EBI-12188413">
        <id>B2RUZ4</id>
        <label>SMIM1</label>
    </interactant>
    <organismsDiffer>false</organismsDiffer>
    <experiments>3</experiments>
</comment>
<comment type="interaction">
    <interactant intactId="EBI-8646596">
        <id>P49447</id>
    </interactant>
    <interactant intactId="EBI-17280858">
        <id>Q8WWF3</id>
        <label>SSMEM1</label>
    </interactant>
    <organismsDiffer>false</organismsDiffer>
    <experiments>3</experiments>
</comment>
<comment type="interaction">
    <interactant intactId="EBI-8646596">
        <id>P49447</id>
    </interactant>
    <interactant intactId="EBI-1394295">
        <id>Q13277</id>
        <label>STX3</label>
    </interactant>
    <organismsDiffer>false</organismsDiffer>
    <experiments>3</experiments>
</comment>
<comment type="interaction">
    <interactant intactId="EBI-8646596">
        <id>P49447</id>
    </interactant>
    <interactant intactId="EBI-1049004">
        <id>P57105</id>
        <label>SYNJ2BP</label>
    </interactant>
    <organismsDiffer>false</organismsDiffer>
    <experiments>3</experiments>
</comment>
<comment type="interaction">
    <interactant intactId="EBI-8646596">
        <id>P49447</id>
    </interactant>
    <interactant intactId="EBI-13351685">
        <id>Q96CE8</id>
        <label>TM4SF18</label>
    </interactant>
    <organismsDiffer>false</organismsDiffer>
    <experiments>3</experiments>
</comment>
<comment type="interaction">
    <interactant intactId="EBI-8646596">
        <id>P49447</id>
    </interactant>
    <interactant intactId="EBI-723946">
        <id>P17152</id>
        <label>TMEM11</label>
    </interactant>
    <organismsDiffer>false</organismsDiffer>
    <experiments>3</experiments>
</comment>
<comment type="interaction">
    <interactant intactId="EBI-8646596">
        <id>P49447</id>
    </interactant>
    <interactant intactId="EBI-10694905">
        <id>Q5BJH2-2</id>
        <label>TMEM128</label>
    </interactant>
    <organismsDiffer>false</organismsDiffer>
    <experiments>3</experiments>
</comment>
<comment type="interaction">
    <interactant intactId="EBI-8646596">
        <id>P49447</id>
    </interactant>
    <interactant intactId="EBI-8638294">
        <id>Q9NUH8</id>
        <label>TMEM14B</label>
    </interactant>
    <organismsDiffer>false</organismsDiffer>
    <experiments>3</experiments>
</comment>
<comment type="interaction">
    <interactant intactId="EBI-8646596">
        <id>P49447</id>
    </interactant>
    <interactant intactId="EBI-11724423">
        <id>Q7Z7N9</id>
        <label>TMEM179B</label>
    </interactant>
    <organismsDiffer>false</organismsDiffer>
    <experiments>3</experiments>
</comment>
<comment type="interaction">
    <interactant intactId="EBI-8646596">
        <id>P49447</id>
    </interactant>
    <interactant intactId="EBI-10315004">
        <id>Q9NWH2</id>
        <label>TMEM242</label>
    </interactant>
    <organismsDiffer>false</organismsDiffer>
    <experiments>3</experiments>
</comment>
<comment type="interaction">
    <interactant intactId="EBI-8646596">
        <id>P49447</id>
    </interactant>
    <interactant intactId="EBI-6656213">
        <id>Q6PI78</id>
        <label>TMEM65</label>
    </interactant>
    <organismsDiffer>false</organismsDiffer>
    <experiments>3</experiments>
</comment>
<comment type="interaction">
    <interactant intactId="EBI-8646596">
        <id>P49447</id>
    </interactant>
    <interactant intactId="EBI-11724433">
        <id>Q6ZT21</id>
        <label>TMPPE</label>
    </interactant>
    <organismsDiffer>false</organismsDiffer>
    <experiments>3</experiments>
</comment>
<comment type="interaction">
    <interactant intactId="EBI-8646596">
        <id>P49447</id>
    </interactant>
    <interactant intactId="EBI-16746122">
        <id>Q9NSU2-1</id>
        <label>TREX1</label>
    </interactant>
    <organismsDiffer>false</organismsDiffer>
    <experiments>3</experiments>
</comment>
<comment type="interaction">
    <interactant intactId="EBI-8646596">
        <id>P49447</id>
    </interactant>
    <interactant intactId="EBI-12003468">
        <id>A0AVG3</id>
        <label>TSNARE1</label>
    </interactant>
    <organismsDiffer>false</organismsDiffer>
    <experiments>3</experiments>
</comment>
<comment type="interaction">
    <interactant intactId="EBI-8646596">
        <id>P49447</id>
    </interactant>
    <interactant intactId="EBI-988826">
        <id>Q9Y385</id>
        <label>UBE2J1</label>
    </interactant>
    <organismsDiffer>false</organismsDiffer>
    <experiments>3</experiments>
</comment>
<comment type="interaction">
    <interactant intactId="EBI-8646596">
        <id>P49447</id>
    </interactant>
    <interactant intactId="EBI-1059156">
        <id>Q9P0L0</id>
        <label>VAPA</label>
    </interactant>
    <organismsDiffer>false</organismsDiffer>
    <experiments>3</experiments>
</comment>
<comment type="interaction">
    <interactant intactId="EBI-8646596">
        <id>P49447</id>
    </interactant>
    <interactant intactId="EBI-1188298">
        <id>O95292</id>
        <label>VAPB</label>
    </interactant>
    <organismsDiffer>false</organismsDiffer>
    <experiments>3</experiments>
</comment>
<comment type="interaction">
    <interactant intactId="EBI-8646596">
        <id>P49447</id>
    </interactant>
    <interactant intactId="EBI-12948063">
        <id>Q9NXF8-2</id>
        <label>ZDHHC7</label>
    </interactant>
    <organismsDiffer>false</organismsDiffer>
    <experiments>3</experiments>
</comment>
<comment type="subcellular location">
    <subcellularLocation>
        <location evidence="1">Cytoplasmic vesicle</location>
        <location evidence="1">Secretory vesicle</location>
        <location evidence="1">Chromaffin granule membrane</location>
        <topology evidence="2">Multi-pass membrane protein</topology>
    </subcellularLocation>
    <text evidence="1">Secretory vesicle containing catecholamines and amidated peptides.</text>
</comment>
<comment type="alternative products">
    <event type="alternative splicing"/>
    <isoform>
        <id>P49447-1</id>
        <name>1</name>
        <sequence type="displayed"/>
    </isoform>
    <isoform>
        <id>P49447-2</id>
        <name>2</name>
        <sequence type="described" ref="VSP_056950"/>
    </isoform>
</comment>
<comment type="tissue specificity">
    <text evidence="6">Expressed in many tissues, in particular the brain especially in the cortex and hippocampus.</text>
</comment>
<comment type="disease" evidence="6">
    <disease id="DI-05383">
        <name>Orthostatic hypotension 2</name>
        <acronym>ORTHYP2</acronym>
        <description>An autosomal recessive disorder characterized by severe orthostatic hypotension apparent from infancy or early childhood, low plasma and urinary levels of norepinephrine and epinephrine, and episodic hypoglycemia. Some patients may also have renal dysfunction and reduced life expectancy. Orthostatic hypotension, also known as postural hypotension, is a finding defined as a 20-mm Hg decrease in systolic pressure or a 10-mm Hg decrease in diastolic pressure occurring 3 minutes after a person has risen from supine to standing. Symptoms include dizziness, blurred vision, and sometimes syncope.</description>
        <dbReference type="MIM" id="618182"/>
    </disease>
    <text>The disease is caused by variants affecting the gene represented in this entry.</text>
</comment>
<reference key="1">
    <citation type="journal article" date="1995" name="J. Biol. Chem.">
        <title>Genomic structure and expression of the human gene encoding cytochrome b561, an integral protein of the chromaffin granule membrane.</title>
        <authorList>
            <person name="Srivastava M."/>
        </authorList>
    </citation>
    <scope>NUCLEOTIDE SEQUENCE [GENOMIC DNA]</scope>
    <source>
        <tissue>Peripheral blood</tissue>
    </source>
</reference>
<reference key="2">
    <citation type="submission" date="2003-05" db="EMBL/GenBank/DDBJ databases">
        <title>Cloning of human full-length CDSs in BD Creator(TM) system donor vector.</title>
        <authorList>
            <person name="Kalnine N."/>
            <person name="Chen X."/>
            <person name="Rolfs A."/>
            <person name="Halleck A."/>
            <person name="Hines L."/>
            <person name="Eisenstein S."/>
            <person name="Koundinya M."/>
            <person name="Raphael J."/>
            <person name="Moreira D."/>
            <person name="Kelley T."/>
            <person name="LaBaer J."/>
            <person name="Lin Y."/>
            <person name="Phelan M."/>
            <person name="Farmer A."/>
        </authorList>
    </citation>
    <scope>NUCLEOTIDE SEQUENCE [LARGE SCALE MRNA] (ISOFORM 1)</scope>
</reference>
<reference key="3">
    <citation type="journal article" date="2004" name="Nat. Genet.">
        <title>Complete sequencing and characterization of 21,243 full-length human cDNAs.</title>
        <authorList>
            <person name="Ota T."/>
            <person name="Suzuki Y."/>
            <person name="Nishikawa T."/>
            <person name="Otsuki T."/>
            <person name="Sugiyama T."/>
            <person name="Irie R."/>
            <person name="Wakamatsu A."/>
            <person name="Hayashi K."/>
            <person name="Sato H."/>
            <person name="Nagai K."/>
            <person name="Kimura K."/>
            <person name="Makita H."/>
            <person name="Sekine M."/>
            <person name="Obayashi M."/>
            <person name="Nishi T."/>
            <person name="Shibahara T."/>
            <person name="Tanaka T."/>
            <person name="Ishii S."/>
            <person name="Yamamoto J."/>
            <person name="Saito K."/>
            <person name="Kawai Y."/>
            <person name="Isono Y."/>
            <person name="Nakamura Y."/>
            <person name="Nagahari K."/>
            <person name="Murakami K."/>
            <person name="Yasuda T."/>
            <person name="Iwayanagi T."/>
            <person name="Wagatsuma M."/>
            <person name="Shiratori A."/>
            <person name="Sudo H."/>
            <person name="Hosoiri T."/>
            <person name="Kaku Y."/>
            <person name="Kodaira H."/>
            <person name="Kondo H."/>
            <person name="Sugawara M."/>
            <person name="Takahashi M."/>
            <person name="Kanda K."/>
            <person name="Yokoi T."/>
            <person name="Furuya T."/>
            <person name="Kikkawa E."/>
            <person name="Omura Y."/>
            <person name="Abe K."/>
            <person name="Kamihara K."/>
            <person name="Katsuta N."/>
            <person name="Sato K."/>
            <person name="Tanikawa M."/>
            <person name="Yamazaki M."/>
            <person name="Ninomiya K."/>
            <person name="Ishibashi T."/>
            <person name="Yamashita H."/>
            <person name="Murakawa K."/>
            <person name="Fujimori K."/>
            <person name="Tanai H."/>
            <person name="Kimata M."/>
            <person name="Watanabe M."/>
            <person name="Hiraoka S."/>
            <person name="Chiba Y."/>
            <person name="Ishida S."/>
            <person name="Ono Y."/>
            <person name="Takiguchi S."/>
            <person name="Watanabe S."/>
            <person name="Yosida M."/>
            <person name="Hotuta T."/>
            <person name="Kusano J."/>
            <person name="Kanehori K."/>
            <person name="Takahashi-Fujii A."/>
            <person name="Hara H."/>
            <person name="Tanase T.-O."/>
            <person name="Nomura Y."/>
            <person name="Togiya S."/>
            <person name="Komai F."/>
            <person name="Hara R."/>
            <person name="Takeuchi K."/>
            <person name="Arita M."/>
            <person name="Imose N."/>
            <person name="Musashino K."/>
            <person name="Yuuki H."/>
            <person name="Oshima A."/>
            <person name="Sasaki N."/>
            <person name="Aotsuka S."/>
            <person name="Yoshikawa Y."/>
            <person name="Matsunawa H."/>
            <person name="Ichihara T."/>
            <person name="Shiohata N."/>
            <person name="Sano S."/>
            <person name="Moriya S."/>
            <person name="Momiyama H."/>
            <person name="Satoh N."/>
            <person name="Takami S."/>
            <person name="Terashima Y."/>
            <person name="Suzuki O."/>
            <person name="Nakagawa S."/>
            <person name="Senoh A."/>
            <person name="Mizoguchi H."/>
            <person name="Goto Y."/>
            <person name="Shimizu F."/>
            <person name="Wakebe H."/>
            <person name="Hishigaki H."/>
            <person name="Watanabe T."/>
            <person name="Sugiyama A."/>
            <person name="Takemoto M."/>
            <person name="Kawakami B."/>
            <person name="Yamazaki M."/>
            <person name="Watanabe K."/>
            <person name="Kumagai A."/>
            <person name="Itakura S."/>
            <person name="Fukuzumi Y."/>
            <person name="Fujimori Y."/>
            <person name="Komiyama M."/>
            <person name="Tashiro H."/>
            <person name="Tanigami A."/>
            <person name="Fujiwara T."/>
            <person name="Ono T."/>
            <person name="Yamada K."/>
            <person name="Fujii Y."/>
            <person name="Ozaki K."/>
            <person name="Hirao M."/>
            <person name="Ohmori Y."/>
            <person name="Kawabata A."/>
            <person name="Hikiji T."/>
            <person name="Kobatake N."/>
            <person name="Inagaki H."/>
            <person name="Ikema Y."/>
            <person name="Okamoto S."/>
            <person name="Okitani R."/>
            <person name="Kawakami T."/>
            <person name="Noguchi S."/>
            <person name="Itoh T."/>
            <person name="Shigeta K."/>
            <person name="Senba T."/>
            <person name="Matsumura K."/>
            <person name="Nakajima Y."/>
            <person name="Mizuno T."/>
            <person name="Morinaga M."/>
            <person name="Sasaki M."/>
            <person name="Togashi T."/>
            <person name="Oyama M."/>
            <person name="Hata H."/>
            <person name="Watanabe M."/>
            <person name="Komatsu T."/>
            <person name="Mizushima-Sugano J."/>
            <person name="Satoh T."/>
            <person name="Shirai Y."/>
            <person name="Takahashi Y."/>
            <person name="Nakagawa K."/>
            <person name="Okumura K."/>
            <person name="Nagase T."/>
            <person name="Nomura N."/>
            <person name="Kikuchi H."/>
            <person name="Masuho Y."/>
            <person name="Yamashita R."/>
            <person name="Nakai K."/>
            <person name="Yada T."/>
            <person name="Nakamura Y."/>
            <person name="Ohara O."/>
            <person name="Isogai T."/>
            <person name="Sugano S."/>
        </authorList>
    </citation>
    <scope>NUCLEOTIDE SEQUENCE [LARGE SCALE MRNA] (ISOFORMS 1 AND 2)</scope>
    <source>
        <tissue>Mammary gland</tissue>
        <tissue>Testis</tissue>
    </source>
</reference>
<reference key="4">
    <citation type="journal article" date="2006" name="Nature">
        <title>DNA sequence of human chromosome 17 and analysis of rearrangement in the human lineage.</title>
        <authorList>
            <person name="Zody M.C."/>
            <person name="Garber M."/>
            <person name="Adams D.J."/>
            <person name="Sharpe T."/>
            <person name="Harrow J."/>
            <person name="Lupski J.R."/>
            <person name="Nicholson C."/>
            <person name="Searle S.M."/>
            <person name="Wilming L."/>
            <person name="Young S.K."/>
            <person name="Abouelleil A."/>
            <person name="Allen N.R."/>
            <person name="Bi W."/>
            <person name="Bloom T."/>
            <person name="Borowsky M.L."/>
            <person name="Bugalter B.E."/>
            <person name="Butler J."/>
            <person name="Chang J.L."/>
            <person name="Chen C.-K."/>
            <person name="Cook A."/>
            <person name="Corum B."/>
            <person name="Cuomo C.A."/>
            <person name="de Jong P.J."/>
            <person name="DeCaprio D."/>
            <person name="Dewar K."/>
            <person name="FitzGerald M."/>
            <person name="Gilbert J."/>
            <person name="Gibson R."/>
            <person name="Gnerre S."/>
            <person name="Goldstein S."/>
            <person name="Grafham D.V."/>
            <person name="Grocock R."/>
            <person name="Hafez N."/>
            <person name="Hagopian D.S."/>
            <person name="Hart E."/>
            <person name="Norman C.H."/>
            <person name="Humphray S."/>
            <person name="Jaffe D.B."/>
            <person name="Jones M."/>
            <person name="Kamal M."/>
            <person name="Khodiyar V.K."/>
            <person name="LaButti K."/>
            <person name="Laird G."/>
            <person name="Lehoczky J."/>
            <person name="Liu X."/>
            <person name="Lokyitsang T."/>
            <person name="Loveland J."/>
            <person name="Lui A."/>
            <person name="Macdonald P."/>
            <person name="Major J.E."/>
            <person name="Matthews L."/>
            <person name="Mauceli E."/>
            <person name="McCarroll S.A."/>
            <person name="Mihalev A.H."/>
            <person name="Mudge J."/>
            <person name="Nguyen C."/>
            <person name="Nicol R."/>
            <person name="O'Leary S.B."/>
            <person name="Osoegawa K."/>
            <person name="Schwartz D.C."/>
            <person name="Shaw-Smith C."/>
            <person name="Stankiewicz P."/>
            <person name="Steward C."/>
            <person name="Swarbreck D."/>
            <person name="Venkataraman V."/>
            <person name="Whittaker C.A."/>
            <person name="Yang X."/>
            <person name="Zimmer A.R."/>
            <person name="Bradley A."/>
            <person name="Hubbard T."/>
            <person name="Birren B.W."/>
            <person name="Rogers J."/>
            <person name="Lander E.S."/>
            <person name="Nusbaum C."/>
        </authorList>
    </citation>
    <scope>NUCLEOTIDE SEQUENCE [LARGE SCALE GENOMIC DNA]</scope>
</reference>
<reference key="5">
    <citation type="submission" date="2005-09" db="EMBL/GenBank/DDBJ databases">
        <authorList>
            <person name="Mural R.J."/>
            <person name="Istrail S."/>
            <person name="Sutton G.G."/>
            <person name="Florea L."/>
            <person name="Halpern A.L."/>
            <person name="Mobarry C.M."/>
            <person name="Lippert R."/>
            <person name="Walenz B."/>
            <person name="Shatkay H."/>
            <person name="Dew I."/>
            <person name="Miller J.R."/>
            <person name="Flanigan M.J."/>
            <person name="Edwards N.J."/>
            <person name="Bolanos R."/>
            <person name="Fasulo D."/>
            <person name="Halldorsson B.V."/>
            <person name="Hannenhalli S."/>
            <person name="Turner R."/>
            <person name="Yooseph S."/>
            <person name="Lu F."/>
            <person name="Nusskern D.R."/>
            <person name="Shue B.C."/>
            <person name="Zheng X.H."/>
            <person name="Zhong F."/>
            <person name="Delcher A.L."/>
            <person name="Huson D.H."/>
            <person name="Kravitz S.A."/>
            <person name="Mouchard L."/>
            <person name="Reinert K."/>
            <person name="Remington K.A."/>
            <person name="Clark A.G."/>
            <person name="Waterman M.S."/>
            <person name="Eichler E.E."/>
            <person name="Adams M.D."/>
            <person name="Hunkapiller M.W."/>
            <person name="Myers E.W."/>
            <person name="Venter J.C."/>
        </authorList>
    </citation>
    <scope>NUCLEOTIDE SEQUENCE [LARGE SCALE GENOMIC DNA]</scope>
</reference>
<reference key="6">
    <citation type="journal article" date="2004" name="Genome Res.">
        <title>The status, quality, and expansion of the NIH full-length cDNA project: the Mammalian Gene Collection (MGC).</title>
        <authorList>
            <consortium name="The MGC Project Team"/>
        </authorList>
    </citation>
    <scope>NUCLEOTIDE SEQUENCE [LARGE SCALE MRNA] (ISOFORM 1)</scope>
    <source>
        <tissue>Brain</tissue>
        <tissue>Lung</tissue>
        <tissue>PNS</tissue>
    </source>
</reference>
<reference key="7">
    <citation type="journal article" date="1994" name="Biochem. J.">
        <title>Human cytochrome b561: a revised hypothesis for conformation in membranes which reconciles sequence and functional information.</title>
        <authorList>
            <person name="Srivastava M."/>
            <person name="Gibson K.R."/>
            <person name="Pollard H.B."/>
            <person name="Fleming P.J."/>
        </authorList>
    </citation>
    <scope>NUCLEOTIDE SEQUENCE [GENOMIC DNA] OF 6-251</scope>
    <source>
        <tissue>Caudate nucleus</tissue>
    </source>
</reference>
<reference key="8">
    <citation type="journal article" date="2018" name="Circ. Res.">
        <title>Mutations in CYB561 causing a novel orthostatic hypotension syndrome.</title>
        <authorList>
            <person name="van den Berg M.P."/>
            <person name="Almomani R."/>
            <person name="Biaggioni I."/>
            <person name="van Faassen M."/>
            <person name="van der Harst P."/>
            <person name="Sillje H.H.W."/>
            <person name="Mateo Leach I."/>
            <person name="Hemmelder M.H."/>
            <person name="Navis G."/>
            <person name="Luijckx G.J."/>
            <person name="de Brouwer A.P.M."/>
            <person name="Venselaar H."/>
            <person name="Verbeek M.M."/>
            <person name="van der Zwaag P.A."/>
            <person name="Jongbloed J.D.H."/>
            <person name="van Tintelen J.P."/>
            <person name="Wevers R.A."/>
            <person name="Kema I.P."/>
        </authorList>
    </citation>
    <scope>INVOLVEMENT IN ORTHYP2</scope>
    <scope>VARIANTS ORTHYP2 44-TRP--GLN-251 DEL AND ARG-88</scope>
    <scope>TISSUE SPECIFICITY</scope>
</reference>
<accession>P49447</accession>
<accession>B2RE96</accession>
<accession>B7Z775</accession>
<accession>D3DU11</accession>
<accession>Q5BJG9</accession>
<accession>Q9BU05</accession>
<accession>Q9BWR9</accession>
<protein>
    <recommendedName>
        <fullName evidence="8">Transmembrane ascorbate-dependent reductase CYB561</fullName>
        <ecNumber evidence="1">7.2.1.-</ecNumber>
    </recommendedName>
    <alternativeName>
        <fullName>Cytochrome b-561</fullName>
    </alternativeName>
    <alternativeName>
        <fullName>Cytochrome b561</fullName>
    </alternativeName>
</protein>
<gene>
    <name evidence="9" type="primary">CYB561</name>
</gene>
<keyword id="KW-0007">Acetylation</keyword>
<keyword id="KW-0025">Alternative splicing</keyword>
<keyword id="KW-0968">Cytoplasmic vesicle</keyword>
<keyword id="KW-0225">Disease variant</keyword>
<keyword id="KW-0249">Electron transport</keyword>
<keyword id="KW-0349">Heme</keyword>
<keyword id="KW-0408">Iron</keyword>
<keyword id="KW-0472">Membrane</keyword>
<keyword id="KW-0479">Metal-binding</keyword>
<keyword id="KW-0597">Phosphoprotein</keyword>
<keyword id="KW-1267">Proteomics identification</keyword>
<keyword id="KW-1185">Reference proteome</keyword>
<keyword id="KW-1278">Translocase</keyword>
<keyword id="KW-0812">Transmembrane</keyword>
<keyword id="KW-1133">Transmembrane helix</keyword>
<keyword id="KW-0813">Transport</keyword>
<feature type="chain" id="PRO_0000151027" description="Transmembrane ascorbate-dependent reductase CYB561">
    <location>
        <begin position="1"/>
        <end position="251"/>
    </location>
</feature>
<feature type="topological domain" description="Cytoplasmic" evidence="2">
    <location>
        <begin position="1"/>
        <end position="16"/>
    </location>
</feature>
<feature type="transmembrane region" description="Helical" evidence="4">
    <location>
        <begin position="17"/>
        <end position="37"/>
    </location>
</feature>
<feature type="topological domain" description="Vesicular" evidence="2">
    <location>
        <begin position="38"/>
        <end position="51"/>
    </location>
</feature>
<feature type="transmembrane region" description="Helical" evidence="4">
    <location>
        <begin position="52"/>
        <end position="72"/>
    </location>
</feature>
<feature type="topological domain" description="Cytoplasmic" evidence="2">
    <location>
        <begin position="73"/>
        <end position="85"/>
    </location>
</feature>
<feature type="transmembrane region" description="Helical" evidence="4">
    <location>
        <begin position="86"/>
        <end position="106"/>
    </location>
</feature>
<feature type="topological domain" description="Vesicular" evidence="2">
    <location>
        <begin position="107"/>
        <end position="124"/>
    </location>
</feature>
<feature type="transmembrane region" description="Helical" evidence="4">
    <location>
        <begin position="125"/>
        <end position="145"/>
    </location>
</feature>
<feature type="topological domain" description="Cytoplasmic" evidence="2">
    <location>
        <begin position="146"/>
        <end position="158"/>
    </location>
</feature>
<feature type="transmembrane region" description="Helical" evidence="4">
    <location>
        <begin position="159"/>
        <end position="179"/>
    </location>
</feature>
<feature type="topological domain" description="Vesicular" evidence="2">
    <location>
        <begin position="180"/>
        <end position="198"/>
    </location>
</feature>
<feature type="transmembrane region" description="Helical" evidence="4">
    <location>
        <begin position="199"/>
        <end position="219"/>
    </location>
</feature>
<feature type="topological domain" description="Cytoplasmic" evidence="2">
    <location>
        <begin position="220"/>
        <end position="251"/>
    </location>
</feature>
<feature type="domain" description="Cytochrome b561" evidence="5">
    <location>
        <begin position="19"/>
        <end position="220"/>
    </location>
</feature>
<feature type="binding site" description="axial binding residue" evidence="2">
    <location>
        <position position="53"/>
    </location>
    <ligand>
        <name>heme b</name>
        <dbReference type="ChEBI" id="CHEBI:60344"/>
        <label>1</label>
    </ligand>
    <ligandPart>
        <name>Fe</name>
        <dbReference type="ChEBI" id="CHEBI:18248"/>
    </ligandPart>
</feature>
<feature type="binding site" evidence="2">
    <location>
        <position position="73"/>
    </location>
    <ligand>
        <name>heme b</name>
        <dbReference type="ChEBI" id="CHEBI:60344"/>
        <label>2</label>
    </ligand>
</feature>
<feature type="binding site" evidence="2">
    <location>
        <position position="80"/>
    </location>
    <ligand>
        <name>heme b</name>
        <dbReference type="ChEBI" id="CHEBI:60344"/>
        <label>2</label>
    </ligand>
</feature>
<feature type="binding site" evidence="2">
    <location>
        <position position="80"/>
    </location>
    <ligand>
        <name>L-ascorbate</name>
        <dbReference type="ChEBI" id="CHEBI:38290"/>
    </ligand>
</feature>
<feature type="binding site" evidence="2">
    <location>
        <position position="84"/>
    </location>
    <ligand>
        <name>L-ascorbate</name>
        <dbReference type="ChEBI" id="CHEBI:38290"/>
    </ligand>
</feature>
<feature type="binding site" description="axial binding residue" evidence="2">
    <location>
        <position position="87"/>
    </location>
    <ligand>
        <name>heme b</name>
        <dbReference type="ChEBI" id="CHEBI:60344"/>
        <label>2</label>
    </ligand>
    <ligandPart>
        <name>Fe</name>
        <dbReference type="ChEBI" id="CHEBI:18248"/>
    </ligandPart>
</feature>
<feature type="binding site" evidence="2">
    <location>
        <begin position="116"/>
        <end position="119"/>
    </location>
    <ligand>
        <name>heme b</name>
        <dbReference type="ChEBI" id="CHEBI:60344"/>
        <label>1</label>
    </ligand>
</feature>
<feature type="binding site" description="axial binding residue" evidence="2">
    <location>
        <position position="121"/>
    </location>
    <ligand>
        <name>heme b</name>
        <dbReference type="ChEBI" id="CHEBI:60344"/>
        <label>1</label>
    </ligand>
    <ligandPart>
        <name>Fe</name>
        <dbReference type="ChEBI" id="CHEBI:18248"/>
    </ligandPart>
</feature>
<feature type="binding site" evidence="2">
    <location>
        <position position="153"/>
    </location>
    <ligand>
        <name>L-ascorbate</name>
        <dbReference type="ChEBI" id="CHEBI:38290"/>
    </ligand>
</feature>
<feature type="binding site" description="axial binding residue" evidence="2">
    <location>
        <position position="160"/>
    </location>
    <ligand>
        <name>heme b</name>
        <dbReference type="ChEBI" id="CHEBI:60344"/>
        <label>2</label>
    </ligand>
    <ligandPart>
        <name>Fe</name>
        <dbReference type="ChEBI" id="CHEBI:18248"/>
    </ligandPart>
</feature>
<feature type="binding site" evidence="2">
    <location>
        <position position="181"/>
    </location>
    <ligand>
        <name>heme b</name>
        <dbReference type="ChEBI" id="CHEBI:60344"/>
        <label>1</label>
    </ligand>
</feature>
<feature type="binding site" evidence="2">
    <location>
        <position position="225"/>
    </location>
    <ligand>
        <name>heme b</name>
        <dbReference type="ChEBI" id="CHEBI:60344"/>
        <label>2</label>
    </ligand>
</feature>
<feature type="modified residue" description="N-acetylmethionine" evidence="1">
    <location>
        <position position="1"/>
    </location>
</feature>
<feature type="modified residue" description="Phosphoserine" evidence="3">
    <location>
        <position position="247"/>
    </location>
</feature>
<feature type="splice variant" id="VSP_056950" description="In isoform 2." evidence="7">
    <original>WLVGFSFFLFPGASFSLRSRYRPQHIFFGATIFLLSVGTALLGLKEALLFNLGGKYSAFEPEGVLANVLGLLLACFGGAVLYILTRADWKRPSQAEEQALSMDFKTLTEGDSPGSQ</original>
    <variation>GQV</variation>
    <location>
        <begin position="136"/>
        <end position="251"/>
    </location>
</feature>
<feature type="sequence variant" id="VAR_081730" description="In ORTHYP2." evidence="6">
    <location>
        <begin position="44"/>
        <end position="251"/>
    </location>
</feature>
<feature type="sequence variant" id="VAR_081731" description="In ORTHYP2; dbSNP:rs772361572." evidence="6">
    <original>G</original>
    <variation>R</variation>
    <location>
        <position position="88"/>
    </location>
</feature>
<feature type="sequence conflict" description="In Ref. 6; AAH02976." evidence="8" ref="6">
    <original>A</original>
    <variation>S</variation>
    <location>
        <position position="6"/>
    </location>
</feature>
<feature type="sequence conflict" description="In Ref. 1; AAC50212 and 7; AAA50952." evidence="8" ref="1 7">
    <original>S</original>
    <variation>P</variation>
    <location>
        <position position="171"/>
    </location>
</feature>
<feature type="sequence conflict" description="In Ref. 1; AAC50212 and 7; AAA50952." evidence="8" ref="1 7">
    <original>TE</original>
    <variation>RQ</variation>
    <location>
        <begin position="243"/>
        <end position="244"/>
    </location>
</feature>